<accession>Q9XEE6</accession>
<comment type="function">
    <text evidence="3">Involved in salt stress response. May positively modulate plant tolerance to salt stress.</text>
</comment>
<comment type="interaction">
    <interactant intactId="EBI-15197095">
        <id>Q9XEE6</id>
    </interactant>
    <interactant intactId="EBI-15192423">
        <id>F4JRB0-2</id>
        <label>HHO5</label>
    </interactant>
    <organismsDiffer>false</organismsDiffer>
    <experiments>3</experiments>
</comment>
<comment type="interaction">
    <interactant intactId="EBI-15197095">
        <id>Q9XEE6</id>
    </interactant>
    <interactant intactId="EBI-15193025">
        <id>Q9LXU1</id>
        <label>NOT9B</label>
    </interactant>
    <organismsDiffer>false</organismsDiffer>
    <experiments>3</experiments>
</comment>
<comment type="subcellular location">
    <subcellularLocation>
        <location evidence="4">Nucleus</location>
    </subcellularLocation>
</comment>
<comment type="tissue specificity">
    <text evidence="3">Expressed in roots and anthers.</text>
</comment>
<comment type="induction">
    <text evidence="3">By salt stress.</text>
</comment>
<evidence type="ECO:0000255" key="1">
    <source>
        <dbReference type="PROSITE-ProRule" id="PRU00723"/>
    </source>
</evidence>
<evidence type="ECO:0000256" key="2">
    <source>
        <dbReference type="SAM" id="MobiDB-lite"/>
    </source>
</evidence>
<evidence type="ECO:0000269" key="3">
    <source>
    </source>
</evidence>
<evidence type="ECO:0000305" key="4"/>
<dbReference type="EMBL" id="AF085279">
    <property type="protein sequence ID" value="AAD25930.1"/>
    <property type="molecule type" value="Genomic_DNA"/>
</dbReference>
<dbReference type="EMBL" id="CP002685">
    <property type="protein sequence ID" value="AEC09787.1"/>
    <property type="molecule type" value="Genomic_DNA"/>
</dbReference>
<dbReference type="EMBL" id="CP002685">
    <property type="protein sequence ID" value="AEC09788.1"/>
    <property type="molecule type" value="Genomic_DNA"/>
</dbReference>
<dbReference type="EMBL" id="AY093016">
    <property type="protein sequence ID" value="AAM13015.1"/>
    <property type="molecule type" value="mRNA"/>
</dbReference>
<dbReference type="EMBL" id="AY128937">
    <property type="protein sequence ID" value="AAM91337.1"/>
    <property type="molecule type" value="mRNA"/>
</dbReference>
<dbReference type="PIR" id="G84825">
    <property type="entry name" value="G84825"/>
</dbReference>
<dbReference type="SMR" id="Q9XEE6"/>
<dbReference type="BioGRID" id="3943">
    <property type="interactions" value="21"/>
</dbReference>
<dbReference type="FunCoup" id="Q9XEE6">
    <property type="interactions" value="422"/>
</dbReference>
<dbReference type="IntAct" id="Q9XEE6">
    <property type="interactions" value="21"/>
</dbReference>
<dbReference type="STRING" id="3702.Q9XEE6"/>
<dbReference type="iPTMnet" id="Q9XEE6"/>
<dbReference type="PaxDb" id="3702-AT2G40140.1"/>
<dbReference type="ProteomicsDB" id="240299"/>
<dbReference type="EnsemblPlants" id="AT2G40140.1">
    <property type="protein sequence ID" value="AT2G40140.1"/>
    <property type="gene ID" value="AT2G40140"/>
</dbReference>
<dbReference type="EnsemblPlants" id="AT2G40140.2">
    <property type="protein sequence ID" value="AT2G40140.2"/>
    <property type="gene ID" value="AT2G40140"/>
</dbReference>
<dbReference type="GeneID" id="818605"/>
<dbReference type="Gramene" id="AT2G40140.1">
    <property type="protein sequence ID" value="AT2G40140.1"/>
    <property type="gene ID" value="AT2G40140"/>
</dbReference>
<dbReference type="Gramene" id="AT2G40140.2">
    <property type="protein sequence ID" value="AT2G40140.2"/>
    <property type="gene ID" value="AT2G40140"/>
</dbReference>
<dbReference type="KEGG" id="ath:AT2G40140"/>
<dbReference type="Araport" id="AT2G40140"/>
<dbReference type="TAIR" id="AT2G40140">
    <property type="gene designation" value="CZF1"/>
</dbReference>
<dbReference type="eggNOG" id="KOG1595">
    <property type="taxonomic scope" value="Eukaryota"/>
</dbReference>
<dbReference type="HOGENOM" id="CLU_015068_2_0_1"/>
<dbReference type="InParanoid" id="Q9XEE6"/>
<dbReference type="OMA" id="RPHVQSP"/>
<dbReference type="PhylomeDB" id="Q9XEE6"/>
<dbReference type="PRO" id="PR:Q9XEE6"/>
<dbReference type="Proteomes" id="UP000006548">
    <property type="component" value="Chromosome 2"/>
</dbReference>
<dbReference type="ExpressionAtlas" id="Q9XEE6">
    <property type="expression patterns" value="baseline and differential"/>
</dbReference>
<dbReference type="GO" id="GO:0005634">
    <property type="term" value="C:nucleus"/>
    <property type="evidence" value="ECO:0007669"/>
    <property type="project" value="UniProtKB-SubCell"/>
</dbReference>
<dbReference type="GO" id="GO:0003677">
    <property type="term" value="F:DNA binding"/>
    <property type="evidence" value="ECO:0007669"/>
    <property type="project" value="UniProtKB-KW"/>
</dbReference>
<dbReference type="GO" id="GO:0003700">
    <property type="term" value="F:DNA-binding transcription factor activity"/>
    <property type="evidence" value="ECO:0000250"/>
    <property type="project" value="TAIR"/>
</dbReference>
<dbReference type="GO" id="GO:0008270">
    <property type="term" value="F:zinc ion binding"/>
    <property type="evidence" value="ECO:0007669"/>
    <property type="project" value="UniProtKB-KW"/>
</dbReference>
<dbReference type="GO" id="GO:0071456">
    <property type="term" value="P:cellular response to hypoxia"/>
    <property type="evidence" value="ECO:0007007"/>
    <property type="project" value="TAIR"/>
</dbReference>
<dbReference type="GO" id="GO:0050832">
    <property type="term" value="P:defense response to fungus"/>
    <property type="evidence" value="ECO:0000315"/>
    <property type="project" value="TAIR"/>
</dbReference>
<dbReference type="GO" id="GO:0006355">
    <property type="term" value="P:regulation of DNA-templated transcription"/>
    <property type="evidence" value="ECO:0000304"/>
    <property type="project" value="TAIR"/>
</dbReference>
<dbReference type="GO" id="GO:0009409">
    <property type="term" value="P:response to cold"/>
    <property type="evidence" value="ECO:0000270"/>
    <property type="project" value="TAIR"/>
</dbReference>
<dbReference type="FunFam" id="1.25.40.20:FF:000496">
    <property type="entry name" value="Zinc finger CCCH domain-containing protein 29"/>
    <property type="match status" value="1"/>
</dbReference>
<dbReference type="FunFam" id="3.30.1370.210:FF:000009">
    <property type="entry name" value="Zinc finger CCCH domain-containing protein 66"/>
    <property type="match status" value="1"/>
</dbReference>
<dbReference type="Gene3D" id="3.30.1370.210">
    <property type="match status" value="1"/>
</dbReference>
<dbReference type="Gene3D" id="1.25.40.20">
    <property type="entry name" value="Ankyrin repeat-containing domain"/>
    <property type="match status" value="1"/>
</dbReference>
<dbReference type="InterPro" id="IPR002110">
    <property type="entry name" value="Ankyrin_rpt"/>
</dbReference>
<dbReference type="InterPro" id="IPR036770">
    <property type="entry name" value="Ankyrin_rpt-contain_sf"/>
</dbReference>
<dbReference type="InterPro" id="IPR045234">
    <property type="entry name" value="Unkempt-like"/>
</dbReference>
<dbReference type="InterPro" id="IPR000571">
    <property type="entry name" value="Znf_CCCH"/>
</dbReference>
<dbReference type="PANTHER" id="PTHR14493">
    <property type="entry name" value="UNKEMPT FAMILY MEMBER"/>
    <property type="match status" value="1"/>
</dbReference>
<dbReference type="PANTHER" id="PTHR14493:SF158">
    <property type="entry name" value="ZINC FINGER CCCH DOMAIN-CONTAINING PROTEIN 29"/>
    <property type="match status" value="1"/>
</dbReference>
<dbReference type="Pfam" id="PF12796">
    <property type="entry name" value="Ank_2"/>
    <property type="match status" value="1"/>
</dbReference>
<dbReference type="Pfam" id="PF00642">
    <property type="entry name" value="zf-CCCH"/>
    <property type="match status" value="1"/>
</dbReference>
<dbReference type="Pfam" id="PF25512">
    <property type="entry name" value="zf-CCCH_AtC3H23"/>
    <property type="match status" value="1"/>
</dbReference>
<dbReference type="SMART" id="SM00248">
    <property type="entry name" value="ANK"/>
    <property type="match status" value="2"/>
</dbReference>
<dbReference type="SMART" id="SM00356">
    <property type="entry name" value="ZnF_C3H1"/>
    <property type="match status" value="2"/>
</dbReference>
<dbReference type="SUPFAM" id="SSF48403">
    <property type="entry name" value="Ankyrin repeat"/>
    <property type="match status" value="1"/>
</dbReference>
<dbReference type="PROSITE" id="PS50297">
    <property type="entry name" value="ANK_REP_REGION"/>
    <property type="match status" value="1"/>
</dbReference>
<dbReference type="PROSITE" id="PS50103">
    <property type="entry name" value="ZF_C3H1"/>
    <property type="match status" value="2"/>
</dbReference>
<feature type="chain" id="PRO_0000371987" description="Zinc finger CCCH domain-containing protein 29">
    <location>
        <begin position="1"/>
        <end position="597"/>
    </location>
</feature>
<feature type="repeat" description="ANK 1">
    <location>
        <begin position="76"/>
        <end position="106"/>
    </location>
</feature>
<feature type="repeat" description="ANK 2">
    <location>
        <begin position="111"/>
        <end position="143"/>
    </location>
</feature>
<feature type="zinc finger region" description="C3H1-type 1" evidence="1">
    <location>
        <begin position="254"/>
        <end position="281"/>
    </location>
</feature>
<feature type="zinc finger region" description="C3H1-type 2" evidence="1">
    <location>
        <begin position="289"/>
        <end position="313"/>
    </location>
</feature>
<feature type="region of interest" description="Disordered" evidence="2">
    <location>
        <begin position="320"/>
        <end position="341"/>
    </location>
</feature>
<feature type="compositionally biased region" description="Polar residues" evidence="2">
    <location>
        <begin position="320"/>
        <end position="337"/>
    </location>
</feature>
<keyword id="KW-0040">ANK repeat</keyword>
<keyword id="KW-0238">DNA-binding</keyword>
<keyword id="KW-0479">Metal-binding</keyword>
<keyword id="KW-0539">Nucleus</keyword>
<keyword id="KW-1185">Reference proteome</keyword>
<keyword id="KW-0677">Repeat</keyword>
<keyword id="KW-0346">Stress response</keyword>
<keyword id="KW-0862">Zinc</keyword>
<keyword id="KW-0863">Zinc-finger</keyword>
<organism>
    <name type="scientific">Arabidopsis thaliana</name>
    <name type="common">Mouse-ear cress</name>
    <dbReference type="NCBI Taxonomy" id="3702"/>
    <lineage>
        <taxon>Eukaryota</taxon>
        <taxon>Viridiplantae</taxon>
        <taxon>Streptophyta</taxon>
        <taxon>Embryophyta</taxon>
        <taxon>Tracheophyta</taxon>
        <taxon>Spermatophyta</taxon>
        <taxon>Magnoliopsida</taxon>
        <taxon>eudicotyledons</taxon>
        <taxon>Gunneridae</taxon>
        <taxon>Pentapetalae</taxon>
        <taxon>rosids</taxon>
        <taxon>malvids</taxon>
        <taxon>Brassicales</taxon>
        <taxon>Brassicaceae</taxon>
        <taxon>Camelineae</taxon>
        <taxon>Arabidopsis</taxon>
    </lineage>
</organism>
<protein>
    <recommendedName>
        <fullName>Zinc finger CCCH domain-containing protein 29</fullName>
        <shortName>AtC3H29</shortName>
    </recommendedName>
    <alternativeName>
        <fullName>AtSZF2</fullName>
    </alternativeName>
</protein>
<sequence>MCGAKSNLCSSKTLTEVEFMRQKSEDGASATCLLEFAACDDLSSFKREIEENPSVEIDESGFWYCRRVGSKKMGFEERTPLMVAAMYGSMEVLNYIIATGRSDVNRVCSDEKVTALHCAVSGCSVSIVEIIKILLDASASPNCVDANGNKPVDLLAKDSRFVPNQSRKAVEVLLTGIHGSVMEEEEEELKSVVTKYPADASLPDINEGVYGTDDFRMFSFKVKPCSRAYSHDWTECPFVHPGENARRRDPRKYPYTCVPCPEFRKGSCPKGDSCEYAHGVFESWLHPAQYRTRLCKDETGCARRVCFFAHRRDELRPVNASTGSAMVSPRSSNQSPEMSVMSPLTLGSSPMNSPMANGVPLSPRNGGLWQNRVNSLTPPPLQLNGSRLKSTLSARDMDMEMELRFRGLDNRRLGDLKPSNLEETFGSYDSASVMQLQSPSRHSQMNHYPSSPVRQPPPHGFESSAAMAAAVMNARSSAFAKRSLSFKPAPVASNVSDWGSPNGKLEWGMQRDELNKLRRSASFGIHGNNNNSVSRPARDYSDEPDVSWVNSLVKENAPERVNERVGNTVNGAASRDKFKLPSWAEQMYIDHEQQIVA</sequence>
<proteinExistence type="evidence at protein level"/>
<reference key="1">
    <citation type="journal article" date="1999" name="Genome Res.">
        <title>A cluster of ABA-regulated genes on Arabidopsis thaliana BAC T07M07.</title>
        <authorList>
            <person name="Wang M.L."/>
            <person name="Belmonte S."/>
            <person name="Kim U."/>
            <person name="Dolan M."/>
            <person name="Morris J.W."/>
            <person name="Goodman H.M."/>
        </authorList>
    </citation>
    <scope>NUCLEOTIDE SEQUENCE [GENOMIC DNA]</scope>
</reference>
<reference key="2">
    <citation type="journal article" date="1999" name="Nature">
        <title>Sequence and analysis of chromosome 2 of the plant Arabidopsis thaliana.</title>
        <authorList>
            <person name="Lin X."/>
            <person name="Kaul S."/>
            <person name="Rounsley S.D."/>
            <person name="Shea T.P."/>
            <person name="Benito M.-I."/>
            <person name="Town C.D."/>
            <person name="Fujii C.Y."/>
            <person name="Mason T.M."/>
            <person name="Bowman C.L."/>
            <person name="Barnstead M.E."/>
            <person name="Feldblyum T.V."/>
            <person name="Buell C.R."/>
            <person name="Ketchum K.A."/>
            <person name="Lee J.J."/>
            <person name="Ronning C.M."/>
            <person name="Koo H.L."/>
            <person name="Moffat K.S."/>
            <person name="Cronin L.A."/>
            <person name="Shen M."/>
            <person name="Pai G."/>
            <person name="Van Aken S."/>
            <person name="Umayam L."/>
            <person name="Tallon L.J."/>
            <person name="Gill J.E."/>
            <person name="Adams M.D."/>
            <person name="Carrera A.J."/>
            <person name="Creasy T.H."/>
            <person name="Goodman H.M."/>
            <person name="Somerville C.R."/>
            <person name="Copenhaver G.P."/>
            <person name="Preuss D."/>
            <person name="Nierman W.C."/>
            <person name="White O."/>
            <person name="Eisen J.A."/>
            <person name="Salzberg S.L."/>
            <person name="Fraser C.M."/>
            <person name="Venter J.C."/>
        </authorList>
    </citation>
    <scope>NUCLEOTIDE SEQUENCE [LARGE SCALE GENOMIC DNA]</scope>
    <source>
        <strain>cv. Columbia</strain>
    </source>
</reference>
<reference key="3">
    <citation type="journal article" date="2017" name="Plant J.">
        <title>Araport11: a complete reannotation of the Arabidopsis thaliana reference genome.</title>
        <authorList>
            <person name="Cheng C.Y."/>
            <person name="Krishnakumar V."/>
            <person name="Chan A.P."/>
            <person name="Thibaud-Nissen F."/>
            <person name="Schobel S."/>
            <person name="Town C.D."/>
        </authorList>
    </citation>
    <scope>GENOME REANNOTATION</scope>
    <source>
        <strain>cv. Columbia</strain>
    </source>
</reference>
<reference key="4">
    <citation type="journal article" date="2003" name="Science">
        <title>Empirical analysis of transcriptional activity in the Arabidopsis genome.</title>
        <authorList>
            <person name="Yamada K."/>
            <person name="Lim J."/>
            <person name="Dale J.M."/>
            <person name="Chen H."/>
            <person name="Shinn P."/>
            <person name="Palm C.J."/>
            <person name="Southwick A.M."/>
            <person name="Wu H.C."/>
            <person name="Kim C.J."/>
            <person name="Nguyen M."/>
            <person name="Pham P.K."/>
            <person name="Cheuk R.F."/>
            <person name="Karlin-Newmann G."/>
            <person name="Liu S.X."/>
            <person name="Lam B."/>
            <person name="Sakano H."/>
            <person name="Wu T."/>
            <person name="Yu G."/>
            <person name="Miranda M."/>
            <person name="Quach H.L."/>
            <person name="Tripp M."/>
            <person name="Chang C.H."/>
            <person name="Lee J.M."/>
            <person name="Toriumi M.J."/>
            <person name="Chan M.M."/>
            <person name="Tang C.C."/>
            <person name="Onodera C.S."/>
            <person name="Deng J.M."/>
            <person name="Akiyama K."/>
            <person name="Ansari Y."/>
            <person name="Arakawa T."/>
            <person name="Banh J."/>
            <person name="Banno F."/>
            <person name="Bowser L."/>
            <person name="Brooks S.Y."/>
            <person name="Carninci P."/>
            <person name="Chao Q."/>
            <person name="Choy N."/>
            <person name="Enju A."/>
            <person name="Goldsmith A.D."/>
            <person name="Gurjal M."/>
            <person name="Hansen N.F."/>
            <person name="Hayashizaki Y."/>
            <person name="Johnson-Hopson C."/>
            <person name="Hsuan V.W."/>
            <person name="Iida K."/>
            <person name="Karnes M."/>
            <person name="Khan S."/>
            <person name="Koesema E."/>
            <person name="Ishida J."/>
            <person name="Jiang P.X."/>
            <person name="Jones T."/>
            <person name="Kawai J."/>
            <person name="Kamiya A."/>
            <person name="Meyers C."/>
            <person name="Nakajima M."/>
            <person name="Narusaka M."/>
            <person name="Seki M."/>
            <person name="Sakurai T."/>
            <person name="Satou M."/>
            <person name="Tamse R."/>
            <person name="Vaysberg M."/>
            <person name="Wallender E.K."/>
            <person name="Wong C."/>
            <person name="Yamamura Y."/>
            <person name="Yuan S."/>
            <person name="Shinozaki K."/>
            <person name="Davis R.W."/>
            <person name="Theologis A."/>
            <person name="Ecker J.R."/>
        </authorList>
    </citation>
    <scope>NUCLEOTIDE SEQUENCE [LARGE SCALE MRNA]</scope>
    <source>
        <strain>cv. Columbia</strain>
    </source>
</reference>
<reference key="5">
    <citation type="journal article" date="2007" name="Plant Cell Physiol.">
        <title>The CCCH-type zinc finger proteins AtSZF1 and AtSZF2 regulate salt stress responses in Arabidopsis.</title>
        <authorList>
            <person name="Sun J."/>
            <person name="Jiang H."/>
            <person name="Xu Y."/>
            <person name="Li H."/>
            <person name="Wu X."/>
            <person name="Xie Q."/>
            <person name="Li C."/>
        </authorList>
    </citation>
    <scope>FUNCTION</scope>
    <scope>TISSUE SPECIFICITY</scope>
    <scope>INDUCTION</scope>
</reference>
<reference key="6">
    <citation type="journal article" date="2008" name="BMC Genomics">
        <title>Genome-wide analysis of CCCH zinc finger family in Arabidopsis and rice.</title>
        <authorList>
            <person name="Wang D."/>
            <person name="Guo Y."/>
            <person name="Wu C."/>
            <person name="Yang G."/>
            <person name="Li Y."/>
            <person name="Zheng C."/>
        </authorList>
    </citation>
    <scope>NOMENCLATURE</scope>
</reference>
<gene>
    <name type="ordered locus">At2g40140</name>
    <name type="ORF">T07M07.3</name>
    <name type="ORF">T7M7.3</name>
</gene>
<name>C3H29_ARATH</name>